<comment type="function">
    <text>After binding acetylcholine, the AChR responds by an extensive change in conformation that affects all subunits and leads to opening of an ion-conducting channel across the plasma membrane.</text>
</comment>
<comment type="catalytic activity">
    <reaction evidence="2">
        <text>K(+)(in) = K(+)(out)</text>
        <dbReference type="Rhea" id="RHEA:29463"/>
        <dbReference type="ChEBI" id="CHEBI:29103"/>
    </reaction>
</comment>
<comment type="catalytic activity">
    <reaction evidence="2">
        <text>Na(+)(in) = Na(+)(out)</text>
        <dbReference type="Rhea" id="RHEA:34963"/>
        <dbReference type="ChEBI" id="CHEBI:29101"/>
    </reaction>
</comment>
<comment type="subunit">
    <text>Pentamer of two alpha chains, and one each of the beta, delta, and gamma (in immature muscle) or epsilon (in mature muscle) chains.</text>
</comment>
<comment type="subcellular location">
    <subcellularLocation>
        <location>Postsynaptic cell membrane</location>
        <topology>Multi-pass membrane protein</topology>
    </subcellularLocation>
    <subcellularLocation>
        <location>Cell membrane</location>
        <topology>Multi-pass membrane protein</topology>
    </subcellularLocation>
</comment>
<comment type="similarity">
    <text evidence="4">Belongs to the ligand-gated ion channel (TC 1.A.9) family. Acetylcholine receptor (TC 1.A.9.1) subfamily.</text>
</comment>
<keyword id="KW-1003">Cell membrane</keyword>
<keyword id="KW-1015">Disulfide bond</keyword>
<keyword id="KW-0325">Glycoprotein</keyword>
<keyword id="KW-0407">Ion channel</keyword>
<keyword id="KW-0406">Ion transport</keyword>
<keyword id="KW-1071">Ligand-gated ion channel</keyword>
<keyword id="KW-0472">Membrane</keyword>
<keyword id="KW-0597">Phosphoprotein</keyword>
<keyword id="KW-0628">Postsynaptic cell membrane</keyword>
<keyword id="KW-0675">Receptor</keyword>
<keyword id="KW-1185">Reference proteome</keyword>
<keyword id="KW-0732">Signal</keyword>
<keyword id="KW-0770">Synapse</keyword>
<keyword id="KW-0812">Transmembrane</keyword>
<keyword id="KW-1133">Transmembrane helix</keyword>
<keyword id="KW-0813">Transport</keyword>
<sequence>MAWIWISLLLPILIYFPGCFSESEEERLLNHIFVERGYRKELRPVEHTGETVNVSLALTLSNLISLKEADETLTTNVWVELAWYDKRLAWDMETYNNIDILRVPPDMVWQPQLILENNNNGVFEVAYYSNVLISSDGFMYWLPPAIFQTSCSINVNYFPFDWQNCSLKFSSLTYNAKEINLQLRQDLDEASQRYYPVEWIIIDPEGFTENGEWEIVHIPAKKNIDRSLSPESTKYQDITFYLIIERKPLFYIINILAPCVLIALMANLVFYLPADSGEKMTLAISVLLAQSVFLLLISQRLPETSFAIPLISKYLMFIMVLVTIVVVSCVIVLNLHFRTPSTHAISERMKEIFLNKLPRILHMSQPAEPEPEPWSGVLLRRSSSVGYIVKAEEYYSVKSRSELMFEKQSERHGLTSRATPARVNPLNANNSQDQLYGEIKPAIDGANFIVKHIRDKNDYNEEKDNWYRIARTVDRLCLFLVTPVMIIGTLWIFLGGAYNLPPSLPFPGDPFIYTKEHRRLI</sequence>
<protein>
    <recommendedName>
        <fullName>Acetylcholine receptor subunit delta</fullName>
    </recommendedName>
</protein>
<accession>P09628</accession>
<evidence type="ECO:0000250" key="1"/>
<evidence type="ECO:0000250" key="2">
    <source>
        <dbReference type="UniProtKB" id="P04759"/>
    </source>
</evidence>
<evidence type="ECO:0000255" key="3"/>
<evidence type="ECO:0000305" key="4"/>
<organism>
    <name type="scientific">Xenopus laevis</name>
    <name type="common">African clawed frog</name>
    <dbReference type="NCBI Taxonomy" id="8355"/>
    <lineage>
        <taxon>Eukaryota</taxon>
        <taxon>Metazoa</taxon>
        <taxon>Chordata</taxon>
        <taxon>Craniata</taxon>
        <taxon>Vertebrata</taxon>
        <taxon>Euteleostomi</taxon>
        <taxon>Amphibia</taxon>
        <taxon>Batrachia</taxon>
        <taxon>Anura</taxon>
        <taxon>Pipoidea</taxon>
        <taxon>Pipidae</taxon>
        <taxon>Xenopodinae</taxon>
        <taxon>Xenopus</taxon>
        <taxon>Xenopus</taxon>
    </lineage>
</organism>
<feature type="signal peptide">
    <location>
        <begin position="1"/>
        <end position="21"/>
    </location>
</feature>
<feature type="chain" id="PRO_0000000327" description="Acetylcholine receptor subunit delta">
    <location>
        <begin position="22"/>
        <end position="521"/>
    </location>
</feature>
<feature type="topological domain" description="Extracellular">
    <location>
        <begin position="22"/>
        <end position="247"/>
    </location>
</feature>
<feature type="transmembrane region" description="Helical">
    <location>
        <begin position="248"/>
        <end position="272"/>
    </location>
</feature>
<feature type="transmembrane region" description="Helical">
    <location>
        <begin position="280"/>
        <end position="297"/>
    </location>
</feature>
<feature type="transmembrane region" description="Helical">
    <location>
        <begin position="314"/>
        <end position="335"/>
    </location>
</feature>
<feature type="topological domain" description="Cytoplasmic">
    <location>
        <begin position="336"/>
        <end position="475"/>
    </location>
</feature>
<feature type="transmembrane region" description="Helical">
    <location>
        <begin position="476"/>
        <end position="494"/>
    </location>
</feature>
<feature type="modified residue" description="Phosphotyrosine; by Tyr-kinases" evidence="1">
    <location>
        <position position="394"/>
    </location>
</feature>
<feature type="glycosylation site" description="N-linked (GlcNAc...) asparagine" evidence="3">
    <location>
        <position position="53"/>
    </location>
</feature>
<feature type="glycosylation site" description="N-linked (GlcNAc...) asparagine" evidence="3">
    <location>
        <position position="164"/>
    </location>
</feature>
<feature type="disulfide bond" evidence="1">
    <location>
        <begin position="151"/>
        <end position="165"/>
    </location>
</feature>
<proteinExistence type="evidence at transcript level"/>
<reference key="1">
    <citation type="journal article" date="1988" name="J. Cell Biol.">
        <title>Regulation of acetylcholine receptor transcript expression during development in Xenopus laevis.</title>
        <authorList>
            <person name="Baldwin T.J."/>
            <person name="Yoshihara C.M."/>
            <person name="Blackmer K."/>
            <person name="Kintner C.R."/>
            <person name="Burden S.J."/>
        </authorList>
    </citation>
    <scope>NUCLEOTIDE SEQUENCE [MRNA]</scope>
    <source>
        <tissue>Muscle</tissue>
    </source>
</reference>
<gene>
    <name type="primary">chrnd</name>
</gene>
<dbReference type="EMBL" id="X07069">
    <property type="protein sequence ID" value="CAA30105.1"/>
    <property type="molecule type" value="mRNA"/>
</dbReference>
<dbReference type="PIR" id="C28529">
    <property type="entry name" value="C28529"/>
</dbReference>
<dbReference type="RefSeq" id="NP_001095267.1">
    <property type="nucleotide sequence ID" value="NM_001101797.1"/>
</dbReference>
<dbReference type="SMR" id="P09628"/>
<dbReference type="GlyCosmos" id="P09628">
    <property type="glycosylation" value="2 sites, No reported glycans"/>
</dbReference>
<dbReference type="GeneID" id="444847"/>
<dbReference type="KEGG" id="xla:444847"/>
<dbReference type="AGR" id="Xenbase:XB-GENE-989980"/>
<dbReference type="CTD" id="444847"/>
<dbReference type="Xenbase" id="XB-GENE-989980">
    <property type="gene designation" value="chrnd.L"/>
</dbReference>
<dbReference type="OrthoDB" id="5975154at2759"/>
<dbReference type="Proteomes" id="UP000186698">
    <property type="component" value="Chromosome 5L"/>
</dbReference>
<dbReference type="Bgee" id="444847">
    <property type="expression patterns" value="Expressed in muscle tissue and 3 other cell types or tissues"/>
</dbReference>
<dbReference type="GO" id="GO:0005892">
    <property type="term" value="C:acetylcholine-gated channel complex"/>
    <property type="evidence" value="ECO:0000318"/>
    <property type="project" value="GO_Central"/>
</dbReference>
<dbReference type="GO" id="GO:0043005">
    <property type="term" value="C:neuron projection"/>
    <property type="evidence" value="ECO:0000318"/>
    <property type="project" value="GO_Central"/>
</dbReference>
<dbReference type="GO" id="GO:0005886">
    <property type="term" value="C:plasma membrane"/>
    <property type="evidence" value="ECO:0000318"/>
    <property type="project" value="GO_Central"/>
</dbReference>
<dbReference type="GO" id="GO:0045211">
    <property type="term" value="C:postsynaptic membrane"/>
    <property type="evidence" value="ECO:0007669"/>
    <property type="project" value="UniProtKB-SubCell"/>
</dbReference>
<dbReference type="GO" id="GO:0045202">
    <property type="term" value="C:synapse"/>
    <property type="evidence" value="ECO:0000318"/>
    <property type="project" value="GO_Central"/>
</dbReference>
<dbReference type="GO" id="GO:0015464">
    <property type="term" value="F:acetylcholine receptor activity"/>
    <property type="evidence" value="ECO:0000318"/>
    <property type="project" value="GO_Central"/>
</dbReference>
<dbReference type="GO" id="GO:0022848">
    <property type="term" value="F:acetylcholine-gated monoatomic cation-selective channel activity"/>
    <property type="evidence" value="ECO:0000318"/>
    <property type="project" value="GO_Central"/>
</dbReference>
<dbReference type="GO" id="GO:0095500">
    <property type="term" value="P:acetylcholine receptor signaling pathway"/>
    <property type="evidence" value="ECO:0000318"/>
    <property type="project" value="GO_Central"/>
</dbReference>
<dbReference type="GO" id="GO:0007268">
    <property type="term" value="P:chemical synaptic transmission"/>
    <property type="evidence" value="ECO:0000318"/>
    <property type="project" value="GO_Central"/>
</dbReference>
<dbReference type="GO" id="GO:0051899">
    <property type="term" value="P:membrane depolarization"/>
    <property type="evidence" value="ECO:0000318"/>
    <property type="project" value="GO_Central"/>
</dbReference>
<dbReference type="GO" id="GO:0034220">
    <property type="term" value="P:monoatomic ion transmembrane transport"/>
    <property type="evidence" value="ECO:0000318"/>
    <property type="project" value="GO_Central"/>
</dbReference>
<dbReference type="CDD" id="cd19028">
    <property type="entry name" value="LGIC_ECD_nAChR_D"/>
    <property type="match status" value="1"/>
</dbReference>
<dbReference type="CDD" id="cd19064">
    <property type="entry name" value="LGIC_TM_nAChR"/>
    <property type="match status" value="1"/>
</dbReference>
<dbReference type="FunFam" id="1.20.58.390:FF:000029">
    <property type="entry name" value="acetylcholine receptor subunit delta isoform X1"/>
    <property type="match status" value="1"/>
</dbReference>
<dbReference type="FunFam" id="1.20.58.390:FF:000010">
    <property type="entry name" value="Nicotinic acetylcholine receptor subunit epsilon"/>
    <property type="match status" value="1"/>
</dbReference>
<dbReference type="FunFam" id="2.70.170.10:FF:000012">
    <property type="entry name" value="Nicotinic acetylcholine receptor subunit gamma"/>
    <property type="match status" value="1"/>
</dbReference>
<dbReference type="Gene3D" id="2.70.170.10">
    <property type="entry name" value="Neurotransmitter-gated ion-channel ligand-binding domain"/>
    <property type="match status" value="1"/>
</dbReference>
<dbReference type="Gene3D" id="1.20.58.390">
    <property type="entry name" value="Neurotransmitter-gated ion-channel transmembrane domain"/>
    <property type="match status" value="2"/>
</dbReference>
<dbReference type="InterPro" id="IPR006202">
    <property type="entry name" value="Neur_chan_lig-bd"/>
</dbReference>
<dbReference type="InterPro" id="IPR036734">
    <property type="entry name" value="Neur_chan_lig-bd_sf"/>
</dbReference>
<dbReference type="InterPro" id="IPR006201">
    <property type="entry name" value="Neur_channel"/>
</dbReference>
<dbReference type="InterPro" id="IPR036719">
    <property type="entry name" value="Neuro-gated_channel_TM_sf"/>
</dbReference>
<dbReference type="InterPro" id="IPR038050">
    <property type="entry name" value="Neuro_actylchol_rec"/>
</dbReference>
<dbReference type="InterPro" id="IPR006029">
    <property type="entry name" value="Neurotrans-gated_channel_TM"/>
</dbReference>
<dbReference type="InterPro" id="IPR018000">
    <property type="entry name" value="Neurotransmitter_ion_chnl_CS"/>
</dbReference>
<dbReference type="InterPro" id="IPR002394">
    <property type="entry name" value="Nicotinic_acetylcholine_rcpt"/>
</dbReference>
<dbReference type="NCBIfam" id="TIGR00860">
    <property type="entry name" value="LIC"/>
    <property type="match status" value="1"/>
</dbReference>
<dbReference type="PANTHER" id="PTHR18945">
    <property type="entry name" value="NEUROTRANSMITTER GATED ION CHANNEL"/>
    <property type="match status" value="1"/>
</dbReference>
<dbReference type="Pfam" id="PF02931">
    <property type="entry name" value="Neur_chan_LBD"/>
    <property type="match status" value="1"/>
</dbReference>
<dbReference type="Pfam" id="PF02932">
    <property type="entry name" value="Neur_chan_memb"/>
    <property type="match status" value="1"/>
</dbReference>
<dbReference type="PRINTS" id="PR00254">
    <property type="entry name" value="NICOTINICR"/>
</dbReference>
<dbReference type="PRINTS" id="PR00252">
    <property type="entry name" value="NRIONCHANNEL"/>
</dbReference>
<dbReference type="SUPFAM" id="SSF90112">
    <property type="entry name" value="Neurotransmitter-gated ion-channel transmembrane pore"/>
    <property type="match status" value="1"/>
</dbReference>
<dbReference type="SUPFAM" id="SSF63712">
    <property type="entry name" value="Nicotinic receptor ligand binding domain-like"/>
    <property type="match status" value="1"/>
</dbReference>
<dbReference type="PROSITE" id="PS00236">
    <property type="entry name" value="NEUROTR_ION_CHANNEL"/>
    <property type="match status" value="1"/>
</dbReference>
<name>ACHD_XENLA</name>